<accession>P39728</accession>
<accession>D6VPI0</accession>
<gene>
    <name type="ordered locus">YAL037W</name>
</gene>
<organism>
    <name type="scientific">Saccharomyces cerevisiae (strain ATCC 204508 / S288c)</name>
    <name type="common">Baker's yeast</name>
    <dbReference type="NCBI Taxonomy" id="559292"/>
    <lineage>
        <taxon>Eukaryota</taxon>
        <taxon>Fungi</taxon>
        <taxon>Dikarya</taxon>
        <taxon>Ascomycota</taxon>
        <taxon>Saccharomycotina</taxon>
        <taxon>Saccharomycetes</taxon>
        <taxon>Saccharomycetales</taxon>
        <taxon>Saccharomycetaceae</taxon>
        <taxon>Saccharomyces</taxon>
    </lineage>
</organism>
<proteinExistence type="predicted"/>
<keyword id="KW-1185">Reference proteome</keyword>
<feature type="chain" id="PRO_0000202418" description="Uncharacterized protein YAL037W">
    <location>
        <begin position="1"/>
        <end position="267"/>
    </location>
</feature>
<name>YAD7_YEAST</name>
<sequence length="267" mass="30457">MDMEIEDSSPIDDLKLQKLDTNVYFGPCEILTQPILLQYENIKFIIGVNLSTEKIASFYTQYFRNSNSVVVNLCSPTTAAVATKKAAIDLYIRNNTILLQKFVGQYLQMGKKIKTSLTQAQTDTIQSLPQFCNSNVLSGEPLVQYQAFNDLLALFKSFSHFGNILVISSHSYDCALLKFLISRVMTYYPLVTIQDSLQYMKATLNISISTSDEFDILNDKELWEFGQTQEILKRRQTSSVKRRCVNLPENSTIDNRMLMGTTKRGRF</sequence>
<protein>
    <recommendedName>
        <fullName>Uncharacterized protein YAL037W</fullName>
    </recommendedName>
</protein>
<reference key="1">
    <citation type="journal article" date="1995" name="Proc. Natl. Acad. Sci. U.S.A.">
        <title>The nucleotide sequence of chromosome I from Saccharomyces cerevisiae.</title>
        <authorList>
            <person name="Bussey H."/>
            <person name="Kaback D.B."/>
            <person name="Zhong W.-W."/>
            <person name="Vo D.H."/>
            <person name="Clark M.W."/>
            <person name="Fortin N."/>
            <person name="Hall J."/>
            <person name="Ouellette B.F.F."/>
            <person name="Keng T."/>
            <person name="Barton A.B."/>
            <person name="Su Y."/>
            <person name="Davies C.J."/>
            <person name="Storms R.K."/>
        </authorList>
    </citation>
    <scope>NUCLEOTIDE SEQUENCE [LARGE SCALE GENOMIC DNA]</scope>
    <source>
        <strain>ATCC 204508 / S288c</strain>
    </source>
</reference>
<reference key="2">
    <citation type="submission" date="1996-04" db="EMBL/GenBank/DDBJ databases">
        <authorList>
            <person name="Vo D.T."/>
        </authorList>
    </citation>
    <scope>SEQUENCE REVISION TO C-TERMINUS</scope>
</reference>
<reference key="3">
    <citation type="journal article" date="2014" name="G3 (Bethesda)">
        <title>The reference genome sequence of Saccharomyces cerevisiae: Then and now.</title>
        <authorList>
            <person name="Engel S.R."/>
            <person name="Dietrich F.S."/>
            <person name="Fisk D.G."/>
            <person name="Binkley G."/>
            <person name="Balakrishnan R."/>
            <person name="Costanzo M.C."/>
            <person name="Dwight S.S."/>
            <person name="Hitz B.C."/>
            <person name="Karra K."/>
            <person name="Nash R.S."/>
            <person name="Weng S."/>
            <person name="Wong E.D."/>
            <person name="Lloyd P."/>
            <person name="Skrzypek M.S."/>
            <person name="Miyasato S.R."/>
            <person name="Simison M."/>
            <person name="Cherry J.M."/>
        </authorList>
    </citation>
    <scope>GENOME REANNOTATION</scope>
    <source>
        <strain>ATCC 204508 / S288c</strain>
    </source>
</reference>
<dbReference type="EMBL" id="U12980">
    <property type="protein sequence ID" value="AAC04994.1"/>
    <property type="molecule type" value="Genomic_DNA"/>
</dbReference>
<dbReference type="EMBL" id="BK006935">
    <property type="protein sequence ID" value="DAA06950.1"/>
    <property type="molecule type" value="Genomic_DNA"/>
</dbReference>
<dbReference type="PIR" id="S70291">
    <property type="entry name" value="S70291"/>
</dbReference>
<dbReference type="RefSeq" id="NP_009363.1">
    <property type="nucleotide sequence ID" value="NM_001178182.1"/>
</dbReference>
<dbReference type="BioGRID" id="31728">
    <property type="interactions" value="18"/>
</dbReference>
<dbReference type="FunCoup" id="P39728">
    <property type="interactions" value="33"/>
</dbReference>
<dbReference type="PaxDb" id="4932-YAL037W"/>
<dbReference type="EnsemblFungi" id="YAL037W_mRNA">
    <property type="protein sequence ID" value="YAL037W"/>
    <property type="gene ID" value="YAL037W"/>
</dbReference>
<dbReference type="GeneID" id="851194"/>
<dbReference type="KEGG" id="sce:YAL037W"/>
<dbReference type="AGR" id="SGD:S000000035"/>
<dbReference type="SGD" id="S000000035">
    <property type="gene designation" value="YAL037W"/>
</dbReference>
<dbReference type="VEuPathDB" id="FungiDB:YAL037W"/>
<dbReference type="GeneTree" id="ENSGT00940000176424"/>
<dbReference type="HOGENOM" id="CLU_1058274_0_0_1"/>
<dbReference type="InParanoid" id="P39728"/>
<dbReference type="OMA" id="YDCALLK"/>
<dbReference type="OrthoDB" id="4069549at2759"/>
<dbReference type="BioCyc" id="YEAST:G3O-28847-MONOMER"/>
<dbReference type="BioGRID-ORCS" id="851194">
    <property type="hits" value="0 hits in 10 CRISPR screens"/>
</dbReference>
<dbReference type="PRO" id="PR:P39728"/>
<dbReference type="Proteomes" id="UP000002311">
    <property type="component" value="Chromosome I"/>
</dbReference>
<dbReference type="RNAct" id="P39728">
    <property type="molecule type" value="protein"/>
</dbReference>